<feature type="chain" id="PRO_0000122836" description="Protein RecA">
    <location>
        <begin position="1"/>
        <end position="77" status="greater than"/>
    </location>
</feature>
<feature type="non-terminal residue">
    <location>
        <position position="77"/>
    </location>
</feature>
<keyword id="KW-0067">ATP-binding</keyword>
<keyword id="KW-0963">Cytoplasm</keyword>
<keyword id="KW-0227">DNA damage</keyword>
<keyword id="KW-0233">DNA recombination</keyword>
<keyword id="KW-0234">DNA repair</keyword>
<keyword id="KW-0238">DNA-binding</keyword>
<keyword id="KW-0547">Nucleotide-binding</keyword>
<keyword id="KW-0742">SOS response</keyword>
<name>RECA_SPIME</name>
<dbReference type="EMBL" id="U43710">
    <property type="protein sequence ID" value="AAC44644.1"/>
    <property type="molecule type" value="Genomic_DNA"/>
</dbReference>
<dbReference type="SMR" id="Q54428"/>
<dbReference type="GO" id="GO:0005829">
    <property type="term" value="C:cytosol"/>
    <property type="evidence" value="ECO:0007669"/>
    <property type="project" value="TreeGrafter"/>
</dbReference>
<dbReference type="GO" id="GO:0005524">
    <property type="term" value="F:ATP binding"/>
    <property type="evidence" value="ECO:0007669"/>
    <property type="project" value="UniProtKB-KW"/>
</dbReference>
<dbReference type="GO" id="GO:0140664">
    <property type="term" value="F:ATP-dependent DNA damage sensor activity"/>
    <property type="evidence" value="ECO:0007669"/>
    <property type="project" value="InterPro"/>
</dbReference>
<dbReference type="GO" id="GO:0003697">
    <property type="term" value="F:single-stranded DNA binding"/>
    <property type="evidence" value="ECO:0007669"/>
    <property type="project" value="InterPro"/>
</dbReference>
<dbReference type="GO" id="GO:0006310">
    <property type="term" value="P:DNA recombination"/>
    <property type="evidence" value="ECO:0007669"/>
    <property type="project" value="UniProtKB-KW"/>
</dbReference>
<dbReference type="GO" id="GO:0006281">
    <property type="term" value="P:DNA repair"/>
    <property type="evidence" value="ECO:0007669"/>
    <property type="project" value="UniProtKB-KW"/>
</dbReference>
<dbReference type="GO" id="GO:0009432">
    <property type="term" value="P:SOS response"/>
    <property type="evidence" value="ECO:0007669"/>
    <property type="project" value="UniProtKB-KW"/>
</dbReference>
<dbReference type="Gene3D" id="3.40.50.300">
    <property type="entry name" value="P-loop containing nucleotide triphosphate hydrolases"/>
    <property type="match status" value="1"/>
</dbReference>
<dbReference type="InterPro" id="IPR013765">
    <property type="entry name" value="DNA_recomb/repair_RecA"/>
</dbReference>
<dbReference type="InterPro" id="IPR027417">
    <property type="entry name" value="P-loop_NTPase"/>
</dbReference>
<dbReference type="InterPro" id="IPR049428">
    <property type="entry name" value="RecA-like_N"/>
</dbReference>
<dbReference type="InterPro" id="IPR020588">
    <property type="entry name" value="RecA_ATP-bd"/>
</dbReference>
<dbReference type="PANTHER" id="PTHR45900:SF1">
    <property type="entry name" value="MITOCHONDRIAL DNA REPAIR PROTEIN RECA HOMOLOG-RELATED"/>
    <property type="match status" value="1"/>
</dbReference>
<dbReference type="PANTHER" id="PTHR45900">
    <property type="entry name" value="RECA"/>
    <property type="match status" value="1"/>
</dbReference>
<dbReference type="Pfam" id="PF00154">
    <property type="entry name" value="RecA"/>
    <property type="match status" value="1"/>
</dbReference>
<dbReference type="SUPFAM" id="SSF52540">
    <property type="entry name" value="P-loop containing nucleoside triphosphate hydrolases"/>
    <property type="match status" value="1"/>
</dbReference>
<dbReference type="PROSITE" id="PS50162">
    <property type="entry name" value="RECA_2"/>
    <property type="match status" value="1"/>
</dbReference>
<gene>
    <name type="primary">recA</name>
</gene>
<protein>
    <recommendedName>
        <fullName>Protein RecA</fullName>
    </recommendedName>
    <alternativeName>
        <fullName>Recombinase A</fullName>
    </alternativeName>
</protein>
<organism>
    <name type="scientific">Spiroplasma melliferum</name>
    <dbReference type="NCBI Taxonomy" id="2134"/>
    <lineage>
        <taxon>Bacteria</taxon>
        <taxon>Bacillati</taxon>
        <taxon>Mycoplasmatota</taxon>
        <taxon>Mollicutes</taxon>
        <taxon>Entomoplasmatales</taxon>
        <taxon>Spiroplasmataceae</taxon>
        <taxon>Spiroplasma</taxon>
    </lineage>
</organism>
<comment type="function">
    <text>Can catalyze the hydrolysis of ATP in the presence of single-stranded DNA, the ATP-dependent uptake of single-stranded DNA by duplex DNA, and the ATP-dependent hybridization of homologous single-stranded DNAs. It interacts with LexA causing its activation and leading to its autocatalytic cleavage.</text>
</comment>
<comment type="subcellular location">
    <subcellularLocation>
        <location evidence="1">Cytoplasm</location>
    </subcellularLocation>
</comment>
<comment type="similarity">
    <text evidence="2">Belongs to the RecA family.</text>
</comment>
<proteinExistence type="inferred from homology"/>
<sequence length="77" mass="8329">MEDNKPVPPQTKPLDQDEILKTVMKEIEKTYGKGAIMKLGDKSNLTIEAVSTGSLLLDEAIGVGGYPKGRIIEIFGP</sequence>
<evidence type="ECO:0000250" key="1"/>
<evidence type="ECO:0000305" key="2"/>
<accession>Q54428</accession>
<reference key="1">
    <citation type="journal article" date="1996" name="J. Bacteriol.">
        <title>Characterization of the recA gene regions of Spiroplasma citri and Spiroplasma melliferum.</title>
        <authorList>
            <person name="Marais A."/>
            <person name="Bove J.M."/>
            <person name="Renaudin J."/>
        </authorList>
    </citation>
    <scope>NUCLEOTIDE SEQUENCE [GENOMIC DNA]</scope>
    <source>
        <strain>ATCC 33219 / BC3</strain>
    </source>
</reference>